<dbReference type="EMBL" id="AL590443">
    <property type="protein sequence ID" value="CAD26238.1"/>
    <property type="molecule type" value="Genomic_DNA"/>
</dbReference>
<dbReference type="RefSeq" id="NP_597603.1">
    <property type="nucleotide sequence ID" value="NM_001040967.1"/>
</dbReference>
<dbReference type="SMR" id="Q8SW34"/>
<dbReference type="STRING" id="284813.Q8SW34"/>
<dbReference type="GeneID" id="858765"/>
<dbReference type="KEGG" id="ecu:ECU03_0940"/>
<dbReference type="VEuPathDB" id="MicrosporidiaDB:ECU03_0940"/>
<dbReference type="HOGENOM" id="CLU_1390216_0_0_1"/>
<dbReference type="InParanoid" id="Q8SW34"/>
<dbReference type="OrthoDB" id="3269380at2759"/>
<dbReference type="Proteomes" id="UP000000819">
    <property type="component" value="Chromosome III"/>
</dbReference>
<dbReference type="GO" id="GO:0005634">
    <property type="term" value="C:nucleus"/>
    <property type="evidence" value="ECO:0007669"/>
    <property type="project" value="TreeGrafter"/>
</dbReference>
<dbReference type="GO" id="GO:0008270">
    <property type="term" value="F:zinc ion binding"/>
    <property type="evidence" value="ECO:0007669"/>
    <property type="project" value="UniProtKB-KW"/>
</dbReference>
<dbReference type="Gene3D" id="3.30.160.60">
    <property type="entry name" value="Classic Zinc Finger"/>
    <property type="match status" value="2"/>
</dbReference>
<dbReference type="InterPro" id="IPR051580">
    <property type="entry name" value="ZnF-Chromatin_assoc"/>
</dbReference>
<dbReference type="InterPro" id="IPR036236">
    <property type="entry name" value="Znf_C2H2_sf"/>
</dbReference>
<dbReference type="InterPro" id="IPR013087">
    <property type="entry name" value="Znf_C2H2_type"/>
</dbReference>
<dbReference type="PANTHER" id="PTHR23057">
    <property type="entry name" value="JUXTAPOSED WITH ANOTHER ZINC FINGER PROTEIN 1"/>
    <property type="match status" value="1"/>
</dbReference>
<dbReference type="PANTHER" id="PTHR23057:SF0">
    <property type="entry name" value="JUXTAPOSED WITH ANOTHER ZINC FINGER PROTEIN 1"/>
    <property type="match status" value="1"/>
</dbReference>
<dbReference type="Pfam" id="PF00096">
    <property type="entry name" value="zf-C2H2"/>
    <property type="match status" value="2"/>
</dbReference>
<dbReference type="SMART" id="SM00355">
    <property type="entry name" value="ZnF_C2H2"/>
    <property type="match status" value="2"/>
</dbReference>
<dbReference type="SUPFAM" id="SSF57667">
    <property type="entry name" value="beta-beta-alpha zinc fingers"/>
    <property type="match status" value="2"/>
</dbReference>
<dbReference type="PROSITE" id="PS00028">
    <property type="entry name" value="ZINC_FINGER_C2H2_1"/>
    <property type="match status" value="2"/>
</dbReference>
<dbReference type="PROSITE" id="PS50157">
    <property type="entry name" value="ZINC_FINGER_C2H2_2"/>
    <property type="match status" value="2"/>
</dbReference>
<protein>
    <recommendedName>
        <fullName>Zinc finger C2H2 protein ECU03_0940</fullName>
    </recommendedName>
</protein>
<proteinExistence type="predicted"/>
<organism>
    <name type="scientific">Encephalitozoon cuniculi (strain GB-M1)</name>
    <name type="common">Microsporidian parasite</name>
    <dbReference type="NCBI Taxonomy" id="284813"/>
    <lineage>
        <taxon>Eukaryota</taxon>
        <taxon>Fungi</taxon>
        <taxon>Fungi incertae sedis</taxon>
        <taxon>Microsporidia</taxon>
        <taxon>Unikaryonidae</taxon>
        <taxon>Encephalitozoon</taxon>
    </lineage>
</organism>
<feature type="chain" id="PRO_0000047826" description="Zinc finger C2H2 protein ECU03_0940">
    <location>
        <begin position="1"/>
        <end position="196"/>
    </location>
</feature>
<feature type="zinc finger region" description="C2H2-type 1" evidence="1">
    <location>
        <begin position="130"/>
        <end position="155"/>
    </location>
</feature>
<feature type="zinc finger region" description="C2H2-type 2" evidence="1">
    <location>
        <begin position="166"/>
        <end position="191"/>
    </location>
</feature>
<name>Z394_ENCCU</name>
<accession>Q8SW34</accession>
<keyword id="KW-0479">Metal-binding</keyword>
<keyword id="KW-1185">Reference proteome</keyword>
<keyword id="KW-0677">Repeat</keyword>
<keyword id="KW-0862">Zinc</keyword>
<keyword id="KW-0863">Zinc-finger</keyword>
<reference key="1">
    <citation type="journal article" date="2001" name="Nature">
        <title>Genome sequence and gene compaction of the eukaryote parasite Encephalitozoon cuniculi.</title>
        <authorList>
            <person name="Katinka M.D."/>
            <person name="Duprat S."/>
            <person name="Cornillot E."/>
            <person name="Metenier G."/>
            <person name="Thomarat F."/>
            <person name="Prensier G."/>
            <person name="Barbe V."/>
            <person name="Peyretaillade E."/>
            <person name="Brottier P."/>
            <person name="Wincker P."/>
            <person name="Delbac F."/>
            <person name="El Alaoui H."/>
            <person name="Peyret P."/>
            <person name="Saurin W."/>
            <person name="Gouy M."/>
            <person name="Weissenbach J."/>
            <person name="Vivares C.P."/>
        </authorList>
    </citation>
    <scope>NUCLEOTIDE SEQUENCE [LARGE SCALE GENOMIC DNA]</scope>
    <source>
        <strain>GB-M1</strain>
    </source>
</reference>
<gene>
    <name type="ordered locus">ECU03_0940</name>
</gene>
<sequence length="196" mass="22848">MKMNDSSKLKKLYQIEEKKFAERVRRYEDIGHMMDTHQFYLEDVVLKKEEMLYKYISPSQGIAELSEEDSLGFDYEFIHKSVGNKEWRGGISTGEMIKVRKLPCTNLAHGGERNARTSSRMQKTKGGRVYACEIEGCNKKYTSSFGLKYHMKEGHSEEKMNIFKPYVCPFSGCDKKYKNNNGLKYHIKHYHDGQTA</sequence>
<evidence type="ECO:0000255" key="1">
    <source>
        <dbReference type="PROSITE-ProRule" id="PRU00042"/>
    </source>
</evidence>